<name>NADA_GLOC7</name>
<accession>B7KBV9</accession>
<dbReference type="EC" id="2.5.1.72" evidence="1"/>
<dbReference type="EMBL" id="CP001291">
    <property type="protein sequence ID" value="ACK68782.1"/>
    <property type="molecule type" value="Genomic_DNA"/>
</dbReference>
<dbReference type="RefSeq" id="WP_012597732.1">
    <property type="nucleotide sequence ID" value="NC_011729.1"/>
</dbReference>
<dbReference type="SMR" id="B7KBV9"/>
<dbReference type="STRING" id="65393.PCC7424_0314"/>
<dbReference type="KEGG" id="cyc:PCC7424_0314"/>
<dbReference type="eggNOG" id="COG0379">
    <property type="taxonomic scope" value="Bacteria"/>
</dbReference>
<dbReference type="HOGENOM" id="CLU_047382_1_0_3"/>
<dbReference type="OrthoDB" id="9801204at2"/>
<dbReference type="UniPathway" id="UPA00253">
    <property type="reaction ID" value="UER00327"/>
</dbReference>
<dbReference type="Proteomes" id="UP000002384">
    <property type="component" value="Chromosome"/>
</dbReference>
<dbReference type="GO" id="GO:0005829">
    <property type="term" value="C:cytosol"/>
    <property type="evidence" value="ECO:0007669"/>
    <property type="project" value="TreeGrafter"/>
</dbReference>
<dbReference type="GO" id="GO:0051539">
    <property type="term" value="F:4 iron, 4 sulfur cluster binding"/>
    <property type="evidence" value="ECO:0007669"/>
    <property type="project" value="UniProtKB-KW"/>
</dbReference>
<dbReference type="GO" id="GO:0046872">
    <property type="term" value="F:metal ion binding"/>
    <property type="evidence" value="ECO:0007669"/>
    <property type="project" value="UniProtKB-KW"/>
</dbReference>
<dbReference type="GO" id="GO:0008987">
    <property type="term" value="F:quinolinate synthetase A activity"/>
    <property type="evidence" value="ECO:0007669"/>
    <property type="project" value="UniProtKB-UniRule"/>
</dbReference>
<dbReference type="GO" id="GO:0034628">
    <property type="term" value="P:'de novo' NAD biosynthetic process from L-aspartate"/>
    <property type="evidence" value="ECO:0007669"/>
    <property type="project" value="TreeGrafter"/>
</dbReference>
<dbReference type="FunFam" id="3.40.50.10800:FF:000003">
    <property type="entry name" value="Quinolinate synthase A"/>
    <property type="match status" value="1"/>
</dbReference>
<dbReference type="Gene3D" id="3.40.50.10800">
    <property type="entry name" value="NadA-like"/>
    <property type="match status" value="3"/>
</dbReference>
<dbReference type="HAMAP" id="MF_00568">
    <property type="entry name" value="NadA_type2"/>
    <property type="match status" value="1"/>
</dbReference>
<dbReference type="InterPro" id="IPR003473">
    <property type="entry name" value="NadA"/>
</dbReference>
<dbReference type="InterPro" id="IPR036094">
    <property type="entry name" value="NadA_sf"/>
</dbReference>
<dbReference type="InterPro" id="IPR023066">
    <property type="entry name" value="Quinolinate_synth_type2"/>
</dbReference>
<dbReference type="NCBIfam" id="TIGR00550">
    <property type="entry name" value="nadA"/>
    <property type="match status" value="1"/>
</dbReference>
<dbReference type="NCBIfam" id="NF006878">
    <property type="entry name" value="PRK09375.1-2"/>
    <property type="match status" value="1"/>
</dbReference>
<dbReference type="PANTHER" id="PTHR30573:SF0">
    <property type="entry name" value="QUINOLINATE SYNTHASE, CHLOROPLASTIC"/>
    <property type="match status" value="1"/>
</dbReference>
<dbReference type="PANTHER" id="PTHR30573">
    <property type="entry name" value="QUINOLINATE SYNTHETASE A"/>
    <property type="match status" value="1"/>
</dbReference>
<dbReference type="Pfam" id="PF02445">
    <property type="entry name" value="NadA"/>
    <property type="match status" value="1"/>
</dbReference>
<dbReference type="SUPFAM" id="SSF142754">
    <property type="entry name" value="NadA-like"/>
    <property type="match status" value="1"/>
</dbReference>
<sequence length="323" mass="36111">MFTTVRPEQKPINPFIPYDLFTAIDELKRELNAVILAHYYQDPDIQDIADYIGDSLGLSQQAAATSADVIVFAGVHFMAETAKILNPDKLVLLPDLNAGCSLADSCPPQEFAQFKAKYPDHLVVSYINCSAEIKAMSDIICTSSNAVKIVNQIPEDQPIIFAPDRNLGRYVMEQTGRDLVLWQGSCIVHETFSEKKIIQLLMEYPKAEFIAHPECEPSVLRHASYIGSTTALLTYSQKSGSDTFIVATEPGIIHQMQKEAPNKRFIPAPAMNNCLCNECPHMRLNTLEKLYLAMKNKSPEITLPEHIRVAALLPIERMLEMSK</sequence>
<proteinExistence type="inferred from homology"/>
<keyword id="KW-0004">4Fe-4S</keyword>
<keyword id="KW-0963">Cytoplasm</keyword>
<keyword id="KW-0408">Iron</keyword>
<keyword id="KW-0411">Iron-sulfur</keyword>
<keyword id="KW-0479">Metal-binding</keyword>
<keyword id="KW-0662">Pyridine nucleotide biosynthesis</keyword>
<keyword id="KW-1185">Reference proteome</keyword>
<keyword id="KW-0808">Transferase</keyword>
<protein>
    <recommendedName>
        <fullName evidence="1">Quinolinate synthase</fullName>
        <ecNumber evidence="1">2.5.1.72</ecNumber>
    </recommendedName>
</protein>
<evidence type="ECO:0000255" key="1">
    <source>
        <dbReference type="HAMAP-Rule" id="MF_00568"/>
    </source>
</evidence>
<reference key="1">
    <citation type="journal article" date="2011" name="MBio">
        <title>Novel metabolic attributes of the genus Cyanothece, comprising a group of unicellular nitrogen-fixing Cyanobacteria.</title>
        <authorList>
            <person name="Bandyopadhyay A."/>
            <person name="Elvitigala T."/>
            <person name="Welsh E."/>
            <person name="Stockel J."/>
            <person name="Liberton M."/>
            <person name="Min H."/>
            <person name="Sherman L.A."/>
            <person name="Pakrasi H.B."/>
        </authorList>
    </citation>
    <scope>NUCLEOTIDE SEQUENCE [LARGE SCALE GENOMIC DNA]</scope>
    <source>
        <strain>PCC 7424</strain>
    </source>
</reference>
<organism>
    <name type="scientific">Gloeothece citriformis (strain PCC 7424)</name>
    <name type="common">Cyanothece sp. (strain PCC 7424)</name>
    <dbReference type="NCBI Taxonomy" id="65393"/>
    <lineage>
        <taxon>Bacteria</taxon>
        <taxon>Bacillati</taxon>
        <taxon>Cyanobacteriota</taxon>
        <taxon>Cyanophyceae</taxon>
        <taxon>Oscillatoriophycideae</taxon>
        <taxon>Chroococcales</taxon>
        <taxon>Aphanothecaceae</taxon>
        <taxon>Gloeothece</taxon>
        <taxon>Gloeothece citriformis</taxon>
    </lineage>
</organism>
<gene>
    <name evidence="1" type="primary">nadA</name>
    <name type="ordered locus">PCC7424_0314</name>
</gene>
<comment type="function">
    <text evidence="1">Catalyzes the condensation of iminoaspartate with dihydroxyacetone phosphate to form quinolinate.</text>
</comment>
<comment type="catalytic activity">
    <reaction evidence="1">
        <text>iminosuccinate + dihydroxyacetone phosphate = quinolinate + phosphate + 2 H2O + H(+)</text>
        <dbReference type="Rhea" id="RHEA:25888"/>
        <dbReference type="ChEBI" id="CHEBI:15377"/>
        <dbReference type="ChEBI" id="CHEBI:15378"/>
        <dbReference type="ChEBI" id="CHEBI:29959"/>
        <dbReference type="ChEBI" id="CHEBI:43474"/>
        <dbReference type="ChEBI" id="CHEBI:57642"/>
        <dbReference type="ChEBI" id="CHEBI:77875"/>
        <dbReference type="EC" id="2.5.1.72"/>
    </reaction>
    <physiologicalReaction direction="left-to-right" evidence="1">
        <dbReference type="Rhea" id="RHEA:25889"/>
    </physiologicalReaction>
</comment>
<comment type="cofactor">
    <cofactor evidence="1">
        <name>[4Fe-4S] cluster</name>
        <dbReference type="ChEBI" id="CHEBI:49883"/>
    </cofactor>
    <text evidence="1">Binds 1 [4Fe-4S] cluster per subunit.</text>
</comment>
<comment type="pathway">
    <text evidence="1">Cofactor biosynthesis; NAD(+) biosynthesis; quinolinate from iminoaspartate: step 1/1.</text>
</comment>
<comment type="subcellular location">
    <subcellularLocation>
        <location evidence="1">Cytoplasm</location>
    </subcellularLocation>
</comment>
<comment type="similarity">
    <text evidence="1">Belongs to the quinolinate synthase family. Type 2 subfamily.</text>
</comment>
<feature type="chain" id="PRO_1000129435" description="Quinolinate synthase">
    <location>
        <begin position="1"/>
        <end position="323"/>
    </location>
</feature>
<feature type="binding site" evidence="1">
    <location>
        <position position="38"/>
    </location>
    <ligand>
        <name>iminosuccinate</name>
        <dbReference type="ChEBI" id="CHEBI:77875"/>
    </ligand>
</feature>
<feature type="binding site" evidence="1">
    <location>
        <position position="55"/>
    </location>
    <ligand>
        <name>iminosuccinate</name>
        <dbReference type="ChEBI" id="CHEBI:77875"/>
    </ligand>
</feature>
<feature type="binding site" evidence="1">
    <location>
        <position position="100"/>
    </location>
    <ligand>
        <name>[4Fe-4S] cluster</name>
        <dbReference type="ChEBI" id="CHEBI:49883"/>
    </ligand>
</feature>
<feature type="binding site" evidence="1">
    <location>
        <begin position="126"/>
        <end position="128"/>
    </location>
    <ligand>
        <name>iminosuccinate</name>
        <dbReference type="ChEBI" id="CHEBI:77875"/>
    </ligand>
</feature>
<feature type="binding site" evidence="1">
    <location>
        <position position="143"/>
    </location>
    <ligand>
        <name>iminosuccinate</name>
        <dbReference type="ChEBI" id="CHEBI:77875"/>
    </ligand>
</feature>
<feature type="binding site" evidence="1">
    <location>
        <position position="186"/>
    </location>
    <ligand>
        <name>[4Fe-4S] cluster</name>
        <dbReference type="ChEBI" id="CHEBI:49883"/>
    </ligand>
</feature>
<feature type="binding site" evidence="1">
    <location>
        <begin position="212"/>
        <end position="214"/>
    </location>
    <ligand>
        <name>iminosuccinate</name>
        <dbReference type="ChEBI" id="CHEBI:77875"/>
    </ligand>
</feature>
<feature type="binding site" evidence="1">
    <location>
        <position position="229"/>
    </location>
    <ligand>
        <name>iminosuccinate</name>
        <dbReference type="ChEBI" id="CHEBI:77875"/>
    </ligand>
</feature>
<feature type="binding site" evidence="1">
    <location>
        <position position="279"/>
    </location>
    <ligand>
        <name>[4Fe-4S] cluster</name>
        <dbReference type="ChEBI" id="CHEBI:49883"/>
    </ligand>
</feature>